<accession>Q4KLE6</accession>
<keyword id="KW-0489">Methyltransferase</keyword>
<keyword id="KW-0539">Nucleus</keyword>
<keyword id="KW-1185">Reference proteome</keyword>
<keyword id="KW-0949">S-adenosyl-L-methionine</keyword>
<keyword id="KW-0808">Transferase</keyword>
<organism>
    <name type="scientific">Xenopus laevis</name>
    <name type="common">African clawed frog</name>
    <dbReference type="NCBI Taxonomy" id="8355"/>
    <lineage>
        <taxon>Eukaryota</taxon>
        <taxon>Metazoa</taxon>
        <taxon>Chordata</taxon>
        <taxon>Craniata</taxon>
        <taxon>Vertebrata</taxon>
        <taxon>Euteleostomi</taxon>
        <taxon>Amphibia</taxon>
        <taxon>Batrachia</taxon>
        <taxon>Anura</taxon>
        <taxon>Pipoidea</taxon>
        <taxon>Pipidae</taxon>
        <taxon>Xenopodinae</taxon>
        <taxon>Xenopus</taxon>
        <taxon>Xenopus</taxon>
    </lineage>
</organism>
<dbReference type="EC" id="2.1.1.244" evidence="1"/>
<dbReference type="EMBL" id="BC099257">
    <property type="protein sequence ID" value="AAH99257.1"/>
    <property type="molecule type" value="mRNA"/>
</dbReference>
<dbReference type="RefSeq" id="NP_001089614.1">
    <property type="nucleotide sequence ID" value="NM_001096145.1"/>
</dbReference>
<dbReference type="SMR" id="Q4KLE6"/>
<dbReference type="DNASU" id="734671"/>
<dbReference type="GeneID" id="734671"/>
<dbReference type="KEGG" id="xla:734671"/>
<dbReference type="AGR" id="Xenbase:XB-GENE-6255574"/>
<dbReference type="CTD" id="734671"/>
<dbReference type="Xenbase" id="XB-GENE-6255574">
    <property type="gene designation" value="ntmt1.S"/>
</dbReference>
<dbReference type="OMA" id="PVRMYCL"/>
<dbReference type="OrthoDB" id="1298661at2759"/>
<dbReference type="Proteomes" id="UP000186698">
    <property type="component" value="Chromosome 8S"/>
</dbReference>
<dbReference type="Bgee" id="734671">
    <property type="expression patterns" value="Expressed in egg cell and 19 other cell types or tissues"/>
</dbReference>
<dbReference type="GO" id="GO:0005737">
    <property type="term" value="C:cytoplasm"/>
    <property type="evidence" value="ECO:0000318"/>
    <property type="project" value="GO_Central"/>
</dbReference>
<dbReference type="GO" id="GO:0005634">
    <property type="term" value="C:nucleus"/>
    <property type="evidence" value="ECO:0000250"/>
    <property type="project" value="UniProtKB"/>
</dbReference>
<dbReference type="GO" id="GO:0042054">
    <property type="term" value="F:histone methyltransferase activity"/>
    <property type="evidence" value="ECO:0000250"/>
    <property type="project" value="UniProtKB"/>
</dbReference>
<dbReference type="GO" id="GO:0071885">
    <property type="term" value="F:N-terminal protein N-methyltransferase activity"/>
    <property type="evidence" value="ECO:0000250"/>
    <property type="project" value="UniProtKB"/>
</dbReference>
<dbReference type="GO" id="GO:0008276">
    <property type="term" value="F:protein methyltransferase activity"/>
    <property type="evidence" value="ECO:0000250"/>
    <property type="project" value="UniProtKB"/>
</dbReference>
<dbReference type="GO" id="GO:0007059">
    <property type="term" value="P:chromosome segregation"/>
    <property type="evidence" value="ECO:0000250"/>
    <property type="project" value="UniProtKB"/>
</dbReference>
<dbReference type="GO" id="GO:0018013">
    <property type="term" value="P:N-terminal peptidyl-glycine methylation"/>
    <property type="evidence" value="ECO:0000250"/>
    <property type="project" value="UniProtKB"/>
</dbReference>
<dbReference type="GO" id="GO:0018016">
    <property type="term" value="P:N-terminal peptidyl-proline dimethylation"/>
    <property type="evidence" value="ECO:0000250"/>
    <property type="project" value="UniProtKB"/>
</dbReference>
<dbReference type="GO" id="GO:0035572">
    <property type="term" value="P:N-terminal peptidyl-serine dimethylation"/>
    <property type="evidence" value="ECO:0000250"/>
    <property type="project" value="UniProtKB"/>
</dbReference>
<dbReference type="GO" id="GO:0035573">
    <property type="term" value="P:N-terminal peptidyl-serine trimethylation"/>
    <property type="evidence" value="ECO:0000250"/>
    <property type="project" value="UniProtKB"/>
</dbReference>
<dbReference type="GO" id="GO:0007051">
    <property type="term" value="P:spindle organization"/>
    <property type="evidence" value="ECO:0000250"/>
    <property type="project" value="UniProtKB"/>
</dbReference>
<dbReference type="CDD" id="cd02440">
    <property type="entry name" value="AdoMet_MTases"/>
    <property type="match status" value="1"/>
</dbReference>
<dbReference type="FunFam" id="3.40.50.150:FF:000025">
    <property type="entry name" value="N-terminal Xaa-Pro-Lys N-methyltransferase 1"/>
    <property type="match status" value="1"/>
</dbReference>
<dbReference type="Gene3D" id="3.40.50.150">
    <property type="entry name" value="Vaccinia Virus protein VP39"/>
    <property type="match status" value="1"/>
</dbReference>
<dbReference type="InterPro" id="IPR008576">
    <property type="entry name" value="MeTrfase_NTM1"/>
</dbReference>
<dbReference type="InterPro" id="IPR029063">
    <property type="entry name" value="SAM-dependent_MTases_sf"/>
</dbReference>
<dbReference type="PANTHER" id="PTHR12753">
    <property type="entry name" value="AD-003 - RELATED"/>
    <property type="match status" value="1"/>
</dbReference>
<dbReference type="PANTHER" id="PTHR12753:SF1">
    <property type="entry name" value="N-TERMINAL XAA-PRO-LYS N-METHYLTRANSFERASE 1"/>
    <property type="match status" value="1"/>
</dbReference>
<dbReference type="Pfam" id="PF05891">
    <property type="entry name" value="Methyltransf_PK"/>
    <property type="match status" value="1"/>
</dbReference>
<dbReference type="PIRSF" id="PIRSF016958">
    <property type="entry name" value="DUF858_MeTrfase_lik"/>
    <property type="match status" value="1"/>
</dbReference>
<dbReference type="SUPFAM" id="SSF53335">
    <property type="entry name" value="S-adenosyl-L-methionine-dependent methyltransferases"/>
    <property type="match status" value="1"/>
</dbReference>
<proteinExistence type="evidence at transcript level"/>
<reference key="1">
    <citation type="submission" date="2005-07" db="EMBL/GenBank/DDBJ databases">
        <authorList>
            <consortium name="NIH - Xenopus Gene Collection (XGC) project"/>
        </authorList>
    </citation>
    <scope>NUCLEOTIDE SEQUENCE [LARGE SCALE MRNA]</scope>
</reference>
<feature type="chain" id="PRO_0000399777" description="N-terminal Xaa-Pro-Lys N-methyltransferase 1-B">
    <location>
        <begin position="1"/>
        <end position="223"/>
    </location>
</feature>
<feature type="binding site" evidence="1">
    <location>
        <position position="69"/>
    </location>
    <ligand>
        <name>S-adenosyl-L-methionine</name>
        <dbReference type="ChEBI" id="CHEBI:59789"/>
    </ligand>
</feature>
<feature type="binding site" evidence="1">
    <location>
        <position position="74"/>
    </location>
    <ligand>
        <name>S-adenosyl-L-methionine</name>
        <dbReference type="ChEBI" id="CHEBI:59789"/>
    </ligand>
</feature>
<feature type="binding site" evidence="1">
    <location>
        <begin position="91"/>
        <end position="93"/>
    </location>
    <ligand>
        <name>S-adenosyl-L-methionine</name>
        <dbReference type="ChEBI" id="CHEBI:59789"/>
    </ligand>
</feature>
<feature type="binding site" evidence="1">
    <location>
        <begin position="119"/>
        <end position="120"/>
    </location>
    <ligand>
        <name>S-adenosyl-L-methionine</name>
        <dbReference type="ChEBI" id="CHEBI:59789"/>
    </ligand>
</feature>
<feature type="binding site" evidence="1">
    <location>
        <position position="135"/>
    </location>
    <ligand>
        <name>S-adenosyl-L-methionine</name>
        <dbReference type="ChEBI" id="CHEBI:59789"/>
    </ligand>
</feature>
<gene>
    <name type="primary">ntmt1-b</name>
    <name type="synonym">mettl11a-b</name>
</gene>
<protein>
    <recommendedName>
        <fullName>N-terminal Xaa-Pro-Lys N-methyltransferase 1-B</fullName>
        <ecNumber evidence="1">2.1.1.244</ecNumber>
    </recommendedName>
    <alternativeName>
        <fullName>Alpha N-terminal protein methyltransferase 1A-B</fullName>
    </alternativeName>
    <alternativeName>
        <fullName>Methyltransferase-like protein 11A-B</fullName>
    </alternativeName>
    <alternativeName>
        <fullName>X-Pro-Lys N-terminal protein methyltransferase 1A-B</fullName>
        <shortName>NTM1A-B</shortName>
    </alternativeName>
</protein>
<name>NT1AB_XENLA</name>
<evidence type="ECO:0000250" key="1">
    <source>
        <dbReference type="UniProtKB" id="Q9BV86"/>
    </source>
</evidence>
<evidence type="ECO:0000305" key="2"/>
<sequence>MSTELVEDETQFYGKAQNYWKNVPATVDGMLGGYGHISNTDLNSSKKFLQRFLREGSQKTGNTCALDCGAGIGRITKRLLLPLFKTVDMVDVTDEFLNKAKSYLGEEGKRVGKYFCCGLQEFSPEPSRYDVIWIQWVIGHLTDEHLVSFLQRCKLGLRPNGIILIKDNVTQDGSIMDDADSSICRDIDLVRKLIKQAGLSVLAIERQENFPDEIYQVFSFAMR</sequence>
<comment type="function">
    <text evidence="1">Distributive alpha-N-methyltransferase that methylates the N-terminus of target proteins containing the N-terminal motif [Ala/Gly/Pro/Ser]-Pro-Lys when the initiator Met is cleaved. Specifically catalyzes mono-, di- or tri-methylation of the exposed alpha-amino group of the Ala, Gly or Ser residue in the [Ala/Gly/Ser]-Pro-Lys motif and mono- or di-methylation of Pro in the Pro-Pro-Lys motif. Required during mitosis for normal bipolar spindle formation and chromosome segregation via its action on target proteins.</text>
</comment>
<comment type="catalytic activity">
    <reaction evidence="1">
        <text>N-terminal L-alanyl-L-prolyl-L-lysyl-[protein] + 3 S-adenosyl-L-methionine = N-terminal N,N,N-trimethyl-L-alanyl-L-prolyl-L-lysyl-[protein] + 3 S-adenosyl-L-homocysteine + 3 H(+)</text>
        <dbReference type="Rhea" id="RHEA:54712"/>
        <dbReference type="Rhea" id="RHEA-COMP:13785"/>
        <dbReference type="Rhea" id="RHEA-COMP:13971"/>
        <dbReference type="ChEBI" id="CHEBI:15378"/>
        <dbReference type="ChEBI" id="CHEBI:57856"/>
        <dbReference type="ChEBI" id="CHEBI:59789"/>
        <dbReference type="ChEBI" id="CHEBI:138057"/>
        <dbReference type="ChEBI" id="CHEBI:138315"/>
        <dbReference type="EC" id="2.1.1.244"/>
    </reaction>
</comment>
<comment type="catalytic activity">
    <reaction evidence="1">
        <text>N-terminal L-seryl-L-prolyl-L-lysyl-[protein] + 3 S-adenosyl-L-methionine = N-terminal N,N,N-trimethyl-L-seryl-L-prolyl-L-lysyl-[protein] + 3 S-adenosyl-L-homocysteine + 3 H(+)</text>
        <dbReference type="Rhea" id="RHEA:54724"/>
        <dbReference type="Rhea" id="RHEA-COMP:13789"/>
        <dbReference type="Rhea" id="RHEA-COMP:13973"/>
        <dbReference type="ChEBI" id="CHEBI:15378"/>
        <dbReference type="ChEBI" id="CHEBI:57856"/>
        <dbReference type="ChEBI" id="CHEBI:59789"/>
        <dbReference type="ChEBI" id="CHEBI:138061"/>
        <dbReference type="ChEBI" id="CHEBI:138317"/>
        <dbReference type="EC" id="2.1.1.244"/>
    </reaction>
</comment>
<comment type="catalytic activity">
    <reaction evidence="1">
        <text>N-terminal L-prolyl-L-prolyl-L-lysyl-[protein] + 2 S-adenosyl-L-methionine = N-terminal N,N-dimethyl-L-prolyl-L-prolyl-L-lysyl-[protein] + 2 S-adenosyl-L-homocysteine + 2 H(+)</text>
        <dbReference type="Rhea" id="RHEA:54736"/>
        <dbReference type="Rhea" id="RHEA-COMP:13787"/>
        <dbReference type="Rhea" id="RHEA-COMP:13974"/>
        <dbReference type="ChEBI" id="CHEBI:15378"/>
        <dbReference type="ChEBI" id="CHEBI:57856"/>
        <dbReference type="ChEBI" id="CHEBI:59789"/>
        <dbReference type="ChEBI" id="CHEBI:138059"/>
        <dbReference type="ChEBI" id="CHEBI:138318"/>
        <dbReference type="EC" id="2.1.1.244"/>
    </reaction>
</comment>
<comment type="subcellular location">
    <subcellularLocation>
        <location evidence="1">Nucleus</location>
    </subcellularLocation>
    <text evidence="1">Predominantly nuclear.</text>
</comment>
<comment type="similarity">
    <text evidence="2">Belongs to the methyltransferase superfamily. NTM1 family.</text>
</comment>